<dbReference type="EMBL" id="CP000783">
    <property type="protein sequence ID" value="ABU75960.1"/>
    <property type="molecule type" value="Genomic_DNA"/>
</dbReference>
<dbReference type="RefSeq" id="WP_004387369.1">
    <property type="nucleotide sequence ID" value="NC_009778.1"/>
</dbReference>
<dbReference type="SMR" id="A7MH19"/>
<dbReference type="GeneID" id="56729571"/>
<dbReference type="KEGG" id="esa:ESA_00681"/>
<dbReference type="HOGENOM" id="CLU_133780_0_0_6"/>
<dbReference type="Proteomes" id="UP000000260">
    <property type="component" value="Chromosome"/>
</dbReference>
<dbReference type="GO" id="GO:0005829">
    <property type="term" value="C:cytosol"/>
    <property type="evidence" value="ECO:0007669"/>
    <property type="project" value="TreeGrafter"/>
</dbReference>
<dbReference type="GO" id="GO:0008861">
    <property type="term" value="F:formate C-acetyltransferase activity"/>
    <property type="evidence" value="ECO:0007669"/>
    <property type="project" value="TreeGrafter"/>
</dbReference>
<dbReference type="FunFam" id="3.20.70.20:FF:000002">
    <property type="entry name" value="Autonomous glycyl radical cofactor"/>
    <property type="match status" value="1"/>
</dbReference>
<dbReference type="Gene3D" id="3.20.70.20">
    <property type="match status" value="1"/>
</dbReference>
<dbReference type="HAMAP" id="MF_00806">
    <property type="entry name" value="GrcA"/>
    <property type="match status" value="1"/>
</dbReference>
<dbReference type="InterPro" id="IPR050244">
    <property type="entry name" value="Auton_GlycylRad_Cofactor"/>
</dbReference>
<dbReference type="InterPro" id="IPR019777">
    <property type="entry name" value="Form_AcTrfase_GR_CS"/>
</dbReference>
<dbReference type="InterPro" id="IPR001150">
    <property type="entry name" value="Gly_radical"/>
</dbReference>
<dbReference type="InterPro" id="IPR011140">
    <property type="entry name" value="Glycyl_radical_cofactor_GrcA"/>
</dbReference>
<dbReference type="NCBIfam" id="TIGR04365">
    <property type="entry name" value="spare_glycyl"/>
    <property type="match status" value="1"/>
</dbReference>
<dbReference type="PANTHER" id="PTHR30191">
    <property type="entry name" value="FORMATE ACETYLTRANSFERASE"/>
    <property type="match status" value="1"/>
</dbReference>
<dbReference type="PANTHER" id="PTHR30191:SF0">
    <property type="entry name" value="FORMATE ACETYLTRANSFERASE 1"/>
    <property type="match status" value="1"/>
</dbReference>
<dbReference type="Pfam" id="PF01228">
    <property type="entry name" value="Gly_radical"/>
    <property type="match status" value="1"/>
</dbReference>
<dbReference type="PIRSF" id="PIRSF000378">
    <property type="entry name" value="Gly_radicl_yfiD"/>
    <property type="match status" value="1"/>
</dbReference>
<dbReference type="SUPFAM" id="SSF51998">
    <property type="entry name" value="PFL-like glycyl radical enzymes"/>
    <property type="match status" value="1"/>
</dbReference>
<dbReference type="PROSITE" id="PS00850">
    <property type="entry name" value="GLY_RADICAL_1"/>
    <property type="match status" value="1"/>
</dbReference>
<dbReference type="PROSITE" id="PS51149">
    <property type="entry name" value="GLY_RADICAL_2"/>
    <property type="match status" value="1"/>
</dbReference>
<proteinExistence type="inferred from homology"/>
<comment type="function">
    <text evidence="1">Acts as a radical domain for damaged PFL and possibly other radical proteins.</text>
</comment>
<evidence type="ECO:0000255" key="1">
    <source>
        <dbReference type="HAMAP-Rule" id="MF_00806"/>
    </source>
</evidence>
<accession>A7MH19</accession>
<gene>
    <name evidence="1" type="primary">grcA</name>
    <name type="ordered locus">ESA_00681</name>
</gene>
<name>GRCA_CROS8</name>
<sequence length="127" mass="14433">MITGIQITKAANDSLLNSFWLLDNEKGEARCVCAKAGFNEDDIVPVSQLGQFEYREIPMEIKPEVRVEGGQHLNVNVLRRETLEDAVKHPEKYPQLTIRVSGYAVRFNSLTPEQQRDVIARTFTESL</sequence>
<keyword id="KW-0556">Organic radical</keyword>
<keyword id="KW-1185">Reference proteome</keyword>
<reference key="1">
    <citation type="journal article" date="2010" name="PLoS ONE">
        <title>Genome sequence of Cronobacter sakazakii BAA-894 and comparative genomic hybridization analysis with other Cronobacter species.</title>
        <authorList>
            <person name="Kucerova E."/>
            <person name="Clifton S.W."/>
            <person name="Xia X.Q."/>
            <person name="Long F."/>
            <person name="Porwollik S."/>
            <person name="Fulton L."/>
            <person name="Fronick C."/>
            <person name="Minx P."/>
            <person name="Kyung K."/>
            <person name="Warren W."/>
            <person name="Fulton R."/>
            <person name="Feng D."/>
            <person name="Wollam A."/>
            <person name="Shah N."/>
            <person name="Bhonagiri V."/>
            <person name="Nash W.E."/>
            <person name="Hallsworth-Pepin K."/>
            <person name="Wilson R.K."/>
            <person name="McClelland M."/>
            <person name="Forsythe S.J."/>
        </authorList>
    </citation>
    <scope>NUCLEOTIDE SEQUENCE [LARGE SCALE GENOMIC DNA]</scope>
    <source>
        <strain>ATCC BAA-894</strain>
    </source>
</reference>
<protein>
    <recommendedName>
        <fullName evidence="1">Autonomous glycyl radical cofactor</fullName>
    </recommendedName>
</protein>
<organism>
    <name type="scientific">Cronobacter sakazakii (strain ATCC BAA-894)</name>
    <name type="common">Enterobacter sakazakii</name>
    <dbReference type="NCBI Taxonomy" id="290339"/>
    <lineage>
        <taxon>Bacteria</taxon>
        <taxon>Pseudomonadati</taxon>
        <taxon>Pseudomonadota</taxon>
        <taxon>Gammaproteobacteria</taxon>
        <taxon>Enterobacterales</taxon>
        <taxon>Enterobacteriaceae</taxon>
        <taxon>Cronobacter</taxon>
    </lineage>
</organism>
<feature type="chain" id="PRO_1000083722" description="Autonomous glycyl radical cofactor">
    <location>
        <begin position="1"/>
        <end position="127"/>
    </location>
</feature>
<feature type="domain" description="Glycine radical" evidence="1">
    <location>
        <begin position="5"/>
        <end position="127"/>
    </location>
</feature>
<feature type="modified residue" description="Glycine radical" evidence="1">
    <location>
        <position position="102"/>
    </location>
</feature>